<organism>
    <name type="scientific">Brevibacillus brevis (strain 47 / JCM 6285 / NBRC 100599)</name>
    <dbReference type="NCBI Taxonomy" id="358681"/>
    <lineage>
        <taxon>Bacteria</taxon>
        <taxon>Bacillati</taxon>
        <taxon>Bacillota</taxon>
        <taxon>Bacilli</taxon>
        <taxon>Bacillales</taxon>
        <taxon>Paenibacillaceae</taxon>
        <taxon>Brevibacillus</taxon>
    </lineage>
</organism>
<accession>C0ZDU5</accession>
<gene>
    <name type="ordered locus">BBR47_29770</name>
</gene>
<reference key="1">
    <citation type="submission" date="2005-03" db="EMBL/GenBank/DDBJ databases">
        <title>Brevibacillus brevis strain 47, complete genome.</title>
        <authorList>
            <person name="Hosoyama A."/>
            <person name="Yamada R."/>
            <person name="Hongo Y."/>
            <person name="Terui Y."/>
            <person name="Ankai A."/>
            <person name="Masuyama W."/>
            <person name="Sekiguchi M."/>
            <person name="Takeda T."/>
            <person name="Asano K."/>
            <person name="Ohji S."/>
            <person name="Ichikawa N."/>
            <person name="Narita S."/>
            <person name="Aoki N."/>
            <person name="Miura H."/>
            <person name="Matsushita S."/>
            <person name="Sekigawa T."/>
            <person name="Yamagata H."/>
            <person name="Yoshikawa H."/>
            <person name="Udaka S."/>
            <person name="Tanikawa S."/>
            <person name="Fujita N."/>
        </authorList>
    </citation>
    <scope>NUCLEOTIDE SEQUENCE [LARGE SCALE GENOMIC DNA]</scope>
    <source>
        <strain>47 / JCM 6285 / NBRC 100599</strain>
    </source>
</reference>
<protein>
    <recommendedName>
        <fullName evidence="1">Acetaldehyde dehydrogenase</fullName>
        <ecNumber evidence="1">1.2.1.10</ecNumber>
    </recommendedName>
    <alternativeName>
        <fullName evidence="1">Acetaldehyde dehydrogenase [acetylating]</fullName>
    </alternativeName>
</protein>
<sequence>MRKVKVAILGSGNIGTDLMIKLGRSPILELTSMIGIDPDSDGLRRAKAAGYYVFDGGLQPFLESGAELADIVFDATSAKAHILHAKALREAGKFAIDLTPAAVGPYVVPSVNLGAHLNETNINLITCGGQATIPIVHAIGSVSPVSYAEIVATISSKSAGPGTRSNIDEFTETTAQGIEAIGGAKKGKAIIILNPAEPPILMRDTVYAVVDEGADRQAIVKAIHQTVAYIQSYVPGYRLRSEPIFDENKITVFFEVEGAGNYLPTYSGNLDIMTATAVKVAEEYAKYVVGIGTSM</sequence>
<proteinExistence type="inferred from homology"/>
<name>ACDH_BREBN</name>
<keyword id="KW-0058">Aromatic hydrocarbons catabolism</keyword>
<keyword id="KW-0520">NAD</keyword>
<keyword id="KW-0560">Oxidoreductase</keyword>
<keyword id="KW-1185">Reference proteome</keyword>
<feature type="chain" id="PRO_0000387628" description="Acetaldehyde dehydrogenase">
    <location>
        <begin position="1"/>
        <end position="295"/>
    </location>
</feature>
<feature type="active site" description="Acyl-thioester intermediate" evidence="1">
    <location>
        <position position="127"/>
    </location>
</feature>
<feature type="binding site" evidence="1">
    <location>
        <begin position="11"/>
        <end position="14"/>
    </location>
    <ligand>
        <name>NAD(+)</name>
        <dbReference type="ChEBI" id="CHEBI:57540"/>
    </ligand>
</feature>
<feature type="binding site" evidence="1">
    <location>
        <begin position="158"/>
        <end position="166"/>
    </location>
    <ligand>
        <name>NAD(+)</name>
        <dbReference type="ChEBI" id="CHEBI:57540"/>
    </ligand>
</feature>
<feature type="binding site" evidence="1">
    <location>
        <position position="269"/>
    </location>
    <ligand>
        <name>NAD(+)</name>
        <dbReference type="ChEBI" id="CHEBI:57540"/>
    </ligand>
</feature>
<evidence type="ECO:0000255" key="1">
    <source>
        <dbReference type="HAMAP-Rule" id="MF_01657"/>
    </source>
</evidence>
<comment type="catalytic activity">
    <reaction evidence="1">
        <text>acetaldehyde + NAD(+) + CoA = acetyl-CoA + NADH + H(+)</text>
        <dbReference type="Rhea" id="RHEA:23288"/>
        <dbReference type="ChEBI" id="CHEBI:15343"/>
        <dbReference type="ChEBI" id="CHEBI:15378"/>
        <dbReference type="ChEBI" id="CHEBI:57287"/>
        <dbReference type="ChEBI" id="CHEBI:57288"/>
        <dbReference type="ChEBI" id="CHEBI:57540"/>
        <dbReference type="ChEBI" id="CHEBI:57945"/>
        <dbReference type="EC" id="1.2.1.10"/>
    </reaction>
</comment>
<comment type="similarity">
    <text evidence="1">Belongs to the acetaldehyde dehydrogenase family.</text>
</comment>
<dbReference type="EC" id="1.2.1.10" evidence="1"/>
<dbReference type="EMBL" id="AP008955">
    <property type="protein sequence ID" value="BAH43954.1"/>
    <property type="molecule type" value="Genomic_DNA"/>
</dbReference>
<dbReference type="RefSeq" id="WP_015891272.1">
    <property type="nucleotide sequence ID" value="NC_012491.1"/>
</dbReference>
<dbReference type="SMR" id="C0ZDU5"/>
<dbReference type="STRING" id="358681.BBR47_29770"/>
<dbReference type="KEGG" id="bbe:BBR47_29770"/>
<dbReference type="eggNOG" id="COG4569">
    <property type="taxonomic scope" value="Bacteria"/>
</dbReference>
<dbReference type="HOGENOM" id="CLU_062208_0_0_9"/>
<dbReference type="Proteomes" id="UP000001877">
    <property type="component" value="Chromosome"/>
</dbReference>
<dbReference type="GO" id="GO:0008774">
    <property type="term" value="F:acetaldehyde dehydrogenase (acetylating) activity"/>
    <property type="evidence" value="ECO:0007669"/>
    <property type="project" value="UniProtKB-UniRule"/>
</dbReference>
<dbReference type="GO" id="GO:0051287">
    <property type="term" value="F:NAD binding"/>
    <property type="evidence" value="ECO:0007669"/>
    <property type="project" value="UniProtKB-UniRule"/>
</dbReference>
<dbReference type="GO" id="GO:0009056">
    <property type="term" value="P:catabolic process"/>
    <property type="evidence" value="ECO:0007669"/>
    <property type="project" value="UniProtKB-KW"/>
</dbReference>
<dbReference type="CDD" id="cd23933">
    <property type="entry name" value="ALDH_C"/>
    <property type="match status" value="1"/>
</dbReference>
<dbReference type="Gene3D" id="3.30.360.10">
    <property type="entry name" value="Dihydrodipicolinate Reductase, domain 2"/>
    <property type="match status" value="1"/>
</dbReference>
<dbReference type="Gene3D" id="3.40.50.720">
    <property type="entry name" value="NAD(P)-binding Rossmann-like Domain"/>
    <property type="match status" value="1"/>
</dbReference>
<dbReference type="HAMAP" id="MF_01657">
    <property type="entry name" value="Ac_ald_DH_ac"/>
    <property type="match status" value="1"/>
</dbReference>
<dbReference type="InterPro" id="IPR003361">
    <property type="entry name" value="Acetaldehyde_dehydrogenase"/>
</dbReference>
<dbReference type="InterPro" id="IPR015426">
    <property type="entry name" value="Acetylaldehyde_DH_C"/>
</dbReference>
<dbReference type="InterPro" id="IPR036291">
    <property type="entry name" value="NAD(P)-bd_dom_sf"/>
</dbReference>
<dbReference type="InterPro" id="IPR000534">
    <property type="entry name" value="Semialdehyde_DH_NAD-bd"/>
</dbReference>
<dbReference type="NCBIfam" id="TIGR03215">
    <property type="entry name" value="ac_ald_DH_ac"/>
    <property type="match status" value="1"/>
</dbReference>
<dbReference type="NCBIfam" id="NF006157">
    <property type="entry name" value="PRK08300.1"/>
    <property type="match status" value="1"/>
</dbReference>
<dbReference type="Pfam" id="PF09290">
    <property type="entry name" value="AcetDehyd-dimer"/>
    <property type="match status" value="1"/>
</dbReference>
<dbReference type="Pfam" id="PF01118">
    <property type="entry name" value="Semialdhyde_dh"/>
    <property type="match status" value="1"/>
</dbReference>
<dbReference type="PIRSF" id="PIRSF015689">
    <property type="entry name" value="Actaldh_dh_actl"/>
    <property type="match status" value="1"/>
</dbReference>
<dbReference type="SMART" id="SM00859">
    <property type="entry name" value="Semialdhyde_dh"/>
    <property type="match status" value="1"/>
</dbReference>
<dbReference type="SUPFAM" id="SSF55347">
    <property type="entry name" value="Glyceraldehyde-3-phosphate dehydrogenase-like, C-terminal domain"/>
    <property type="match status" value="1"/>
</dbReference>
<dbReference type="SUPFAM" id="SSF51735">
    <property type="entry name" value="NAD(P)-binding Rossmann-fold domains"/>
    <property type="match status" value="1"/>
</dbReference>